<gene>
    <name type="primary">der</name>
    <name type="synonym">engA</name>
    <name type="ordered locus">TM_1446</name>
</gene>
<reference key="1">
    <citation type="journal article" date="1999" name="Nature">
        <title>Evidence for lateral gene transfer between Archaea and Bacteria from genome sequence of Thermotoga maritima.</title>
        <authorList>
            <person name="Nelson K.E."/>
            <person name="Clayton R.A."/>
            <person name="Gill S.R."/>
            <person name="Gwinn M.L."/>
            <person name="Dodson R.J."/>
            <person name="Haft D.H."/>
            <person name="Hickey E.K."/>
            <person name="Peterson J.D."/>
            <person name="Nelson W.C."/>
            <person name="Ketchum K.A."/>
            <person name="McDonald L.A."/>
            <person name="Utterback T.R."/>
            <person name="Malek J.A."/>
            <person name="Linher K.D."/>
            <person name="Garrett M.M."/>
            <person name="Stewart A.M."/>
            <person name="Cotton M.D."/>
            <person name="Pratt M.S."/>
            <person name="Phillips C.A."/>
            <person name="Richardson D.L."/>
            <person name="Heidelberg J.F."/>
            <person name="Sutton G.G."/>
            <person name="Fleischmann R.D."/>
            <person name="Eisen J.A."/>
            <person name="White O."/>
            <person name="Salzberg S.L."/>
            <person name="Smith H.O."/>
            <person name="Venter J.C."/>
            <person name="Fraser C.M."/>
        </authorList>
    </citation>
    <scope>NUCLEOTIDE SEQUENCE [LARGE SCALE GENOMIC DNA]</scope>
    <source>
        <strain>ATCC 43589 / DSM 3109 / JCM 10099 / NBRC 100826 / MSB8</strain>
    </source>
</reference>
<reference key="2">
    <citation type="journal article" date="2001" name="J. Biol. Chem.">
        <title>An essential GTPase, der, containing double GTP-binding domains from Escherichia coli and Thermotoga maritima.</title>
        <authorList>
            <person name="Hwang J."/>
            <person name="Inouye M."/>
        </authorList>
    </citation>
    <scope>BIOPHYSICOCHEMICAL PROPERTIES</scope>
    <scope>CATALYTIC ACTIVITY</scope>
</reference>
<reference key="3">
    <citation type="journal article" date="2002" name="Structure">
        <title>Domain arrangement of Der, a switch protein containing two GTPase domains.</title>
        <authorList>
            <person name="Robinson V.L."/>
            <person name="Hwang J."/>
            <person name="Fox E."/>
            <person name="Inouye M."/>
            <person name="Stock A.M."/>
        </authorList>
    </citation>
    <scope>X-RAY CRYSTALLOGRAPHY (1.9 ANGSTROMS) IN COMPLEX WITH GDP</scope>
    <scope>GTPASE ACTIVITY</scope>
    <scope>GTP-BINDING</scope>
    <scope>DOMAINS</scope>
    <scope>MUTAGENESIS OF ASN-118 AND ASN-300</scope>
</reference>
<dbReference type="EMBL" id="AE000512">
    <property type="protein sequence ID" value="AAD36514.1"/>
    <property type="molecule type" value="Genomic_DNA"/>
</dbReference>
<dbReference type="PIR" id="B72253">
    <property type="entry name" value="B72253"/>
</dbReference>
<dbReference type="RefSeq" id="NP_229245.1">
    <property type="nucleotide sequence ID" value="NC_000853.1"/>
</dbReference>
<dbReference type="RefSeq" id="WP_004081721.1">
    <property type="nucleotide sequence ID" value="NZ_CP011107.1"/>
</dbReference>
<dbReference type="PDB" id="1MKY">
    <property type="method" value="X-ray"/>
    <property type="resolution" value="1.90 A"/>
    <property type="chains" value="A=2-439"/>
</dbReference>
<dbReference type="PDBsum" id="1MKY"/>
<dbReference type="SMR" id="Q9X1F8"/>
<dbReference type="FunCoup" id="Q9X1F8">
    <property type="interactions" value="353"/>
</dbReference>
<dbReference type="STRING" id="243274.TM_1446"/>
<dbReference type="DrugBank" id="DB04315">
    <property type="generic name" value="Guanosine-5'-Diphosphate"/>
</dbReference>
<dbReference type="PaxDb" id="243274-THEMA_07085"/>
<dbReference type="EnsemblBacteria" id="AAD36514">
    <property type="protein sequence ID" value="AAD36514"/>
    <property type="gene ID" value="TM_1446"/>
</dbReference>
<dbReference type="KEGG" id="tma:TM1446"/>
<dbReference type="KEGG" id="tmi:THEMA_07085"/>
<dbReference type="KEGG" id="tmm:Tmari_1452"/>
<dbReference type="KEGG" id="tmw:THMA_1476"/>
<dbReference type="eggNOG" id="COG1160">
    <property type="taxonomic scope" value="Bacteria"/>
</dbReference>
<dbReference type="InParanoid" id="Q9X1F8"/>
<dbReference type="OrthoDB" id="9805918at2"/>
<dbReference type="BRENDA" id="3.6.5.2">
    <property type="organism ID" value="6331"/>
</dbReference>
<dbReference type="EvolutionaryTrace" id="Q9X1F8"/>
<dbReference type="Proteomes" id="UP000008183">
    <property type="component" value="Chromosome"/>
</dbReference>
<dbReference type="GO" id="GO:0005525">
    <property type="term" value="F:GTP binding"/>
    <property type="evidence" value="ECO:0007669"/>
    <property type="project" value="UniProtKB-UniRule"/>
</dbReference>
<dbReference type="GO" id="GO:0043022">
    <property type="term" value="F:ribosome binding"/>
    <property type="evidence" value="ECO:0000318"/>
    <property type="project" value="GO_Central"/>
</dbReference>
<dbReference type="GO" id="GO:0042254">
    <property type="term" value="P:ribosome biogenesis"/>
    <property type="evidence" value="ECO:0007669"/>
    <property type="project" value="UniProtKB-KW"/>
</dbReference>
<dbReference type="CDD" id="cd01894">
    <property type="entry name" value="EngA1"/>
    <property type="match status" value="1"/>
</dbReference>
<dbReference type="CDD" id="cd01895">
    <property type="entry name" value="EngA2"/>
    <property type="match status" value="1"/>
</dbReference>
<dbReference type="FunFam" id="3.40.50.300:FF:000040">
    <property type="entry name" value="GTPase Der"/>
    <property type="match status" value="1"/>
</dbReference>
<dbReference type="FunFam" id="3.40.50.300:FF:000057">
    <property type="entry name" value="GTPase Der"/>
    <property type="match status" value="1"/>
</dbReference>
<dbReference type="Gene3D" id="3.30.300.20">
    <property type="match status" value="1"/>
</dbReference>
<dbReference type="Gene3D" id="3.40.50.300">
    <property type="entry name" value="P-loop containing nucleotide triphosphate hydrolases"/>
    <property type="match status" value="2"/>
</dbReference>
<dbReference type="HAMAP" id="MF_00195">
    <property type="entry name" value="GTPase_Der"/>
    <property type="match status" value="1"/>
</dbReference>
<dbReference type="InterPro" id="IPR031166">
    <property type="entry name" value="G_ENGA"/>
</dbReference>
<dbReference type="InterPro" id="IPR006073">
    <property type="entry name" value="GTP-bd"/>
</dbReference>
<dbReference type="InterPro" id="IPR016484">
    <property type="entry name" value="GTPase_Der"/>
</dbReference>
<dbReference type="InterPro" id="IPR032859">
    <property type="entry name" value="KH_dom-like"/>
</dbReference>
<dbReference type="InterPro" id="IPR015946">
    <property type="entry name" value="KH_dom-like_a/b"/>
</dbReference>
<dbReference type="InterPro" id="IPR027417">
    <property type="entry name" value="P-loop_NTPase"/>
</dbReference>
<dbReference type="InterPro" id="IPR005225">
    <property type="entry name" value="Small_GTP-bd"/>
</dbReference>
<dbReference type="NCBIfam" id="TIGR03594">
    <property type="entry name" value="GTPase_EngA"/>
    <property type="match status" value="1"/>
</dbReference>
<dbReference type="NCBIfam" id="TIGR00231">
    <property type="entry name" value="small_GTP"/>
    <property type="match status" value="2"/>
</dbReference>
<dbReference type="PANTHER" id="PTHR43834">
    <property type="entry name" value="GTPASE DER"/>
    <property type="match status" value="1"/>
</dbReference>
<dbReference type="PANTHER" id="PTHR43834:SF6">
    <property type="entry name" value="GTPASE DER"/>
    <property type="match status" value="1"/>
</dbReference>
<dbReference type="Pfam" id="PF14714">
    <property type="entry name" value="KH_dom-like"/>
    <property type="match status" value="1"/>
</dbReference>
<dbReference type="Pfam" id="PF01926">
    <property type="entry name" value="MMR_HSR1"/>
    <property type="match status" value="2"/>
</dbReference>
<dbReference type="PIRSF" id="PIRSF006485">
    <property type="entry name" value="GTP-binding_EngA"/>
    <property type="match status" value="1"/>
</dbReference>
<dbReference type="PRINTS" id="PR00326">
    <property type="entry name" value="GTP1OBG"/>
</dbReference>
<dbReference type="SUPFAM" id="SSF52540">
    <property type="entry name" value="P-loop containing nucleoside triphosphate hydrolases"/>
    <property type="match status" value="2"/>
</dbReference>
<dbReference type="PROSITE" id="PS51712">
    <property type="entry name" value="G_ENGA"/>
    <property type="match status" value="2"/>
</dbReference>
<comment type="function">
    <text evidence="1">GTPase that plays an essential role in the late steps of ribosome biogenesis (By similarity). Has GTPase activity but no ATPase activity. GTP, GDP, and dGTP but not GMP, ATP, CTP, and UTP compete for GTP binding.</text>
</comment>
<comment type="biophysicochemical properties">
    <kinetics>
        <KM evidence="3">110 uM for GTP</KM>
        <Vmax evidence="3">0.35 umol/min/ug enzyme</Vmax>
        <text>At pH 7.5, 70 degrees Celsius, 5 mM MgCl(2) and 400 mM KCl.</text>
    </kinetics>
</comment>
<comment type="subunit">
    <text evidence="1">Associates with the 50S ribosomal subunit.</text>
</comment>
<comment type="domain">
    <text evidence="4">Each G (guanine nucleotide-binding) domain has activity on its own; domain 1 is twice as active as domain 2. The G domains do not interact, instead each contacts the C-terminal KH-like domain which lies between them.</text>
</comment>
<comment type="similarity">
    <text evidence="5">Belongs to the TRAFAC class TrmE-Era-EngA-EngB-Septin-like GTPase superfamily. EngA (Der) GTPase family.</text>
</comment>
<name>DER_THEMA</name>
<organism>
    <name type="scientific">Thermotoga maritima (strain ATCC 43589 / DSM 3109 / JCM 10099 / NBRC 100826 / MSB8)</name>
    <dbReference type="NCBI Taxonomy" id="243274"/>
    <lineage>
        <taxon>Bacteria</taxon>
        <taxon>Thermotogati</taxon>
        <taxon>Thermotogota</taxon>
        <taxon>Thermotogae</taxon>
        <taxon>Thermotogales</taxon>
        <taxon>Thermotogaceae</taxon>
        <taxon>Thermotoga</taxon>
    </lineage>
</organism>
<feature type="chain" id="PRO_0000179064" description="GTPase Der">
    <location>
        <begin position="1"/>
        <end position="439"/>
    </location>
</feature>
<feature type="domain" description="EngA-type G 1">
    <location>
        <begin position="2"/>
        <end position="168"/>
    </location>
</feature>
<feature type="domain" description="EngA-type G 2">
    <location>
        <begin position="181"/>
        <end position="357"/>
    </location>
</feature>
<feature type="domain" description="KH-like">
    <location>
        <begin position="358"/>
        <end position="439"/>
    </location>
</feature>
<feature type="binding site" evidence="2">
    <location>
        <begin position="8"/>
        <end position="15"/>
    </location>
    <ligand>
        <name>GTP</name>
        <dbReference type="ChEBI" id="CHEBI:37565"/>
        <label>1</label>
    </ligand>
</feature>
<feature type="binding site" evidence="2">
    <location>
        <begin position="55"/>
        <end position="59"/>
    </location>
    <ligand>
        <name>GTP</name>
        <dbReference type="ChEBI" id="CHEBI:37565"/>
        <label>1</label>
    </ligand>
</feature>
<feature type="binding site" evidence="2">
    <location>
        <begin position="118"/>
        <end position="121"/>
    </location>
    <ligand>
        <name>GTP</name>
        <dbReference type="ChEBI" id="CHEBI:37565"/>
        <label>1</label>
    </ligand>
</feature>
<feature type="binding site">
    <location>
        <begin position="190"/>
        <end position="194"/>
    </location>
    <ligand>
        <name>GTP</name>
        <dbReference type="ChEBI" id="CHEBI:37565"/>
        <label>2</label>
    </ligand>
</feature>
<feature type="binding site">
    <location>
        <begin position="300"/>
        <end position="303"/>
    </location>
    <ligand>
        <name>GTP</name>
        <dbReference type="ChEBI" id="CHEBI:37565"/>
        <label>2</label>
    </ligand>
</feature>
<feature type="binding site">
    <location>
        <begin position="336"/>
        <end position="337"/>
    </location>
    <ligand>
        <name>GTP</name>
        <dbReference type="ChEBI" id="CHEBI:37565"/>
        <label>2</label>
    </ligand>
</feature>
<feature type="mutagenesis site" description="10% of GTPase activity remains." evidence="4">
    <original>N</original>
    <variation>D</variation>
    <location>
        <position position="118"/>
    </location>
</feature>
<feature type="mutagenesis site" description="Slight increase of GTPase activity." evidence="4">
    <original>N</original>
    <variation>D</variation>
    <location>
        <position position="300"/>
    </location>
</feature>
<feature type="strand" evidence="6">
    <location>
        <begin position="3"/>
        <end position="7"/>
    </location>
</feature>
<feature type="helix" evidence="6">
    <location>
        <begin position="14"/>
        <end position="22"/>
    </location>
</feature>
<feature type="strand" evidence="6">
    <location>
        <begin position="40"/>
        <end position="46"/>
    </location>
</feature>
<feature type="strand" evidence="6">
    <location>
        <begin position="49"/>
        <end position="55"/>
    </location>
</feature>
<feature type="turn" evidence="6">
    <location>
        <begin position="57"/>
        <end position="60"/>
    </location>
</feature>
<feature type="helix" evidence="6">
    <location>
        <begin position="63"/>
        <end position="65"/>
    </location>
</feature>
<feature type="helix" evidence="6">
    <location>
        <begin position="69"/>
        <end position="79"/>
    </location>
</feature>
<feature type="strand" evidence="6">
    <location>
        <begin position="83"/>
        <end position="90"/>
    </location>
</feature>
<feature type="turn" evidence="6">
    <location>
        <begin position="91"/>
        <end position="93"/>
    </location>
</feature>
<feature type="helix" evidence="6">
    <location>
        <begin position="97"/>
        <end position="109"/>
    </location>
</feature>
<feature type="strand" evidence="6">
    <location>
        <begin position="113"/>
        <end position="119"/>
    </location>
</feature>
<feature type="helix" evidence="6">
    <location>
        <begin position="123"/>
        <end position="129"/>
    </location>
</feature>
<feature type="helix" evidence="6">
    <location>
        <begin position="131"/>
        <end position="134"/>
    </location>
</feature>
<feature type="helix" evidence="6">
    <location>
        <begin position="135"/>
        <end position="137"/>
    </location>
</feature>
<feature type="turn" evidence="6">
    <location>
        <begin position="147"/>
        <end position="150"/>
    </location>
</feature>
<feature type="helix" evidence="6">
    <location>
        <begin position="153"/>
        <end position="166"/>
    </location>
</feature>
<feature type="strand" evidence="6">
    <location>
        <begin position="171"/>
        <end position="173"/>
    </location>
</feature>
<feature type="strand" evidence="6">
    <location>
        <begin position="181"/>
        <end position="186"/>
    </location>
</feature>
<feature type="helix" evidence="6">
    <location>
        <begin position="193"/>
        <end position="201"/>
    </location>
</feature>
<feature type="strand" evidence="6">
    <location>
        <begin position="206"/>
        <end position="208"/>
    </location>
</feature>
<feature type="strand" evidence="6">
    <location>
        <begin position="221"/>
        <end position="225"/>
    </location>
</feature>
<feature type="strand" evidence="6">
    <location>
        <begin position="228"/>
        <end position="234"/>
    </location>
</feature>
<feature type="helix" evidence="6">
    <location>
        <begin position="255"/>
        <end position="263"/>
    </location>
</feature>
<feature type="strand" evidence="6">
    <location>
        <begin position="265"/>
        <end position="272"/>
    </location>
</feature>
<feature type="turn" evidence="6">
    <location>
        <begin position="273"/>
        <end position="275"/>
    </location>
</feature>
<feature type="helix" evidence="6">
    <location>
        <begin position="279"/>
        <end position="290"/>
    </location>
</feature>
<feature type="strand" evidence="6">
    <location>
        <begin position="294"/>
        <end position="300"/>
    </location>
</feature>
<feature type="helix" evidence="6">
    <location>
        <begin position="302"/>
        <end position="304"/>
    </location>
</feature>
<feature type="helix" evidence="6">
    <location>
        <begin position="308"/>
        <end position="310"/>
    </location>
</feature>
<feature type="helix" evidence="6">
    <location>
        <begin position="312"/>
        <end position="322"/>
    </location>
</feature>
<feature type="helix" evidence="6">
    <location>
        <begin position="324"/>
        <end position="326"/>
    </location>
</feature>
<feature type="strand" evidence="6">
    <location>
        <begin position="331"/>
        <end position="333"/>
    </location>
</feature>
<feature type="turn" evidence="6">
    <location>
        <begin position="336"/>
        <end position="339"/>
    </location>
</feature>
<feature type="helix" evidence="6">
    <location>
        <begin position="342"/>
        <end position="356"/>
    </location>
</feature>
<feature type="helix" evidence="6">
    <location>
        <begin position="362"/>
        <end position="373"/>
    </location>
</feature>
<feature type="strand" evidence="6">
    <location>
        <begin position="384"/>
        <end position="391"/>
    </location>
</feature>
<feature type="turn" evidence="6">
    <location>
        <begin position="392"/>
        <end position="395"/>
    </location>
</feature>
<feature type="strand" evidence="6">
    <location>
        <begin position="396"/>
        <end position="402"/>
    </location>
</feature>
<feature type="helix" evidence="6">
    <location>
        <begin position="409"/>
        <end position="422"/>
    </location>
</feature>
<feature type="strand" evidence="6">
    <location>
        <begin position="432"/>
        <end position="437"/>
    </location>
</feature>
<evidence type="ECO:0000250" key="1"/>
<evidence type="ECO:0000255" key="2"/>
<evidence type="ECO:0000269" key="3">
    <source>
    </source>
</evidence>
<evidence type="ECO:0000269" key="4">
    <source>
    </source>
</evidence>
<evidence type="ECO:0000305" key="5"/>
<evidence type="ECO:0007829" key="6">
    <source>
        <dbReference type="PDB" id="1MKY"/>
    </source>
</evidence>
<sequence>MATVLIVGRPNVGKSTLFNKLVKKKKAIVEDEEGVTRDPVQDTVEWYGKTFKLVDTCGVFDNPQDIISQKMKEVTLNMIREADLVLFVVDGKRGITKEDESLADFLRKSTVDTILVANKAENLREFEREVKPELYSLGFGEPIPVSAEHNINLDTLLETIIKKLEEKGLDLESKPEITDAIKVAIVGRPNVGKSTLFNAILNKERALVSPIPGTTRDPVDDEVFIDGRKYVFVDTAGLRRKSRVEPRTVEKYSNYRVVDSIEKADVVVIVLDATQGITRQDQRIAGLVERRGRASVVVFNKWDLVEHREKRYDEFTKLFREKLYFIDYSPLIFTSADKGWNIDRVIDAINLAYASYTTKVPSSAINSALQKVLAFTNLPRGLKIFFGLQVDIKPPTFLFFVNSIEKVKNPQKIFLRKLIRDYVFPFEGSPIFLKFKRSR</sequence>
<proteinExistence type="evidence at protein level"/>
<protein>
    <recommendedName>
        <fullName>GTPase Der</fullName>
        <shortName>TmDer</shortName>
    </recommendedName>
    <alternativeName>
        <fullName>GTP-binding protein EngA</fullName>
    </alternativeName>
</protein>
<keyword id="KW-0002">3D-structure</keyword>
<keyword id="KW-0342">GTP-binding</keyword>
<keyword id="KW-0547">Nucleotide-binding</keyword>
<keyword id="KW-1185">Reference proteome</keyword>
<keyword id="KW-0677">Repeat</keyword>
<keyword id="KW-0690">Ribosome biogenesis</keyword>
<accession>Q9X1F8</accession>